<reference key="1">
    <citation type="journal article" date="1994" name="DNA Cell Biol.">
        <title>Nucleotide sequence and genomic structure of duck acyl-CoA binding protein/diazepam-binding inhibitor: co-localization with S-acyl fatty acid synthase thioesterase.</title>
        <authorList>
            <person name="Rose T.M."/>
            <person name="Schultz E.R."/>
            <person name="Sasaki G.C."/>
            <person name="Kolattukudy P.E."/>
            <person name="Shoyab M."/>
        </authorList>
    </citation>
    <scope>NUCLEOTIDE SEQUENCE [GENOMIC DNA]</scope>
</reference>
<feature type="chain" id="PRO_0000214007" description="Acyl-CoA-binding protein">
    <location>
        <begin position="1"/>
        <end position="103"/>
    </location>
</feature>
<feature type="domain" description="ACB" evidence="3">
    <location>
        <begin position="18"/>
        <end position="103"/>
    </location>
</feature>
<feature type="binding site" evidence="1">
    <location>
        <position position="30"/>
    </location>
    <ligand>
        <name>an acyl-CoA</name>
        <dbReference type="ChEBI" id="CHEBI:58342"/>
    </ligand>
</feature>
<feature type="binding site" evidence="1">
    <location>
        <begin position="45"/>
        <end position="49"/>
    </location>
    <ligand>
        <name>an acyl-CoA</name>
        <dbReference type="ChEBI" id="CHEBI:58342"/>
    </ligand>
</feature>
<feature type="binding site" evidence="1">
    <location>
        <position position="67"/>
    </location>
    <ligand>
        <name>an acyl-CoA</name>
        <dbReference type="ChEBI" id="CHEBI:58342"/>
    </ligand>
</feature>
<feature type="binding site" evidence="1">
    <location>
        <position position="71"/>
    </location>
    <ligand>
        <name>an acyl-CoA</name>
        <dbReference type="ChEBI" id="CHEBI:58342"/>
    </ligand>
</feature>
<feature type="binding site" evidence="1">
    <location>
        <position position="90"/>
    </location>
    <ligand>
        <name>an acyl-CoA</name>
        <dbReference type="ChEBI" id="CHEBI:58342"/>
    </ligand>
</feature>
<sequence length="103" mass="11777">MFQAHLLRGTLTLSFFLHQADFDEAAEEVKKLKTRPTDEELKELYGFYKQATVGDINIECPGMLDLKGKAKWEAWNLKKGISKEDAMNAYISKAKTMVEKYGI</sequence>
<accession>P45882</accession>
<protein>
    <recommendedName>
        <fullName>Acyl-CoA-binding protein</fullName>
        <shortName>ACBP</shortName>
    </recommendedName>
    <alternativeName>
        <fullName>Diazepam-binding inhibitor</fullName>
        <shortName>DBI</shortName>
    </alternativeName>
    <alternativeName>
        <fullName>Endozepine</fullName>
        <shortName>EP</shortName>
    </alternativeName>
</protein>
<name>ACBP_ANAPL</name>
<gene>
    <name type="primary">DBI</name>
</gene>
<proteinExistence type="inferred from homology"/>
<keyword id="KW-0256">Endoplasmic reticulum</keyword>
<keyword id="KW-0333">Golgi apparatus</keyword>
<keyword id="KW-0446">Lipid-binding</keyword>
<keyword id="KW-0813">Transport</keyword>
<comment type="function">
    <text evidence="1">Binds medium- and long-chain acyl-CoA esters with very high affinity and may function as an intracellular carrier of acyl-CoA esters. It is also able to displace diazepam from the benzodiazepine (BZD) recognition site located on the GABA type A receptor. It is therefore possible that this protein also acts as a neuropeptide to modulate the action of the GABA receptor (By similarity).</text>
</comment>
<comment type="subunit">
    <text evidence="1">Monomer.</text>
</comment>
<comment type="subcellular location">
    <subcellularLocation>
        <location evidence="2">Endoplasmic reticulum</location>
    </subcellularLocation>
    <subcellularLocation>
        <location evidence="2">Golgi apparatus</location>
    </subcellularLocation>
    <text evidence="2">Golgi localization is dependent on ligand binding.</text>
</comment>
<comment type="similarity">
    <text evidence="4">Belongs to the ACBP family.</text>
</comment>
<dbReference type="EMBL" id="S73733">
    <property type="protein sequence ID" value="AAB31268.1"/>
    <property type="molecule type" value="Genomic_DNA"/>
</dbReference>
<dbReference type="PIR" id="I51248">
    <property type="entry name" value="I51248"/>
</dbReference>
<dbReference type="SMR" id="P45882"/>
<dbReference type="Proteomes" id="UP000694400">
    <property type="component" value="Unplaced"/>
</dbReference>
<dbReference type="GO" id="GO:0005783">
    <property type="term" value="C:endoplasmic reticulum"/>
    <property type="evidence" value="ECO:0007669"/>
    <property type="project" value="UniProtKB-SubCell"/>
</dbReference>
<dbReference type="GO" id="GO:0005794">
    <property type="term" value="C:Golgi apparatus"/>
    <property type="evidence" value="ECO:0007669"/>
    <property type="project" value="UniProtKB-SubCell"/>
</dbReference>
<dbReference type="GO" id="GO:0000062">
    <property type="term" value="F:fatty-acyl-CoA binding"/>
    <property type="evidence" value="ECO:0007669"/>
    <property type="project" value="InterPro"/>
</dbReference>
<dbReference type="GO" id="GO:0006631">
    <property type="term" value="P:fatty acid metabolic process"/>
    <property type="evidence" value="ECO:0007669"/>
    <property type="project" value="TreeGrafter"/>
</dbReference>
<dbReference type="CDD" id="cd00435">
    <property type="entry name" value="ACBP"/>
    <property type="match status" value="1"/>
</dbReference>
<dbReference type="FunFam" id="1.20.80.10:FF:000010">
    <property type="entry name" value="Acyl-CoA-binding domain-containing protein 5"/>
    <property type="match status" value="1"/>
</dbReference>
<dbReference type="Gene3D" id="1.20.80.10">
    <property type="match status" value="1"/>
</dbReference>
<dbReference type="InterPro" id="IPR022408">
    <property type="entry name" value="Acyl-CoA-binding_prot_CS"/>
</dbReference>
<dbReference type="InterPro" id="IPR000582">
    <property type="entry name" value="Acyl-CoA-binding_protein"/>
</dbReference>
<dbReference type="InterPro" id="IPR035984">
    <property type="entry name" value="Acyl-CoA-binding_sf"/>
</dbReference>
<dbReference type="InterPro" id="IPR014352">
    <property type="entry name" value="FERM/acyl-CoA-bd_prot_sf"/>
</dbReference>
<dbReference type="PANTHER" id="PTHR23310:SF51">
    <property type="entry name" value="ACYL-COA-BINDING DOMAIN-CONTAINING PROTEIN 7"/>
    <property type="match status" value="1"/>
</dbReference>
<dbReference type="PANTHER" id="PTHR23310">
    <property type="entry name" value="ACYL-COA-BINDING PROTEIN, ACBP"/>
    <property type="match status" value="1"/>
</dbReference>
<dbReference type="Pfam" id="PF00887">
    <property type="entry name" value="ACBP"/>
    <property type="match status" value="1"/>
</dbReference>
<dbReference type="PRINTS" id="PR00689">
    <property type="entry name" value="ACOABINDINGP"/>
</dbReference>
<dbReference type="SUPFAM" id="SSF47027">
    <property type="entry name" value="Acyl-CoA binding protein"/>
    <property type="match status" value="1"/>
</dbReference>
<dbReference type="PROSITE" id="PS00880">
    <property type="entry name" value="ACB_1"/>
    <property type="match status" value="1"/>
</dbReference>
<dbReference type="PROSITE" id="PS51228">
    <property type="entry name" value="ACB_2"/>
    <property type="match status" value="1"/>
</dbReference>
<organism>
    <name type="scientific">Anas platyrhynchos</name>
    <name type="common">Mallard</name>
    <name type="synonym">Anas boschas</name>
    <dbReference type="NCBI Taxonomy" id="8839"/>
    <lineage>
        <taxon>Eukaryota</taxon>
        <taxon>Metazoa</taxon>
        <taxon>Chordata</taxon>
        <taxon>Craniata</taxon>
        <taxon>Vertebrata</taxon>
        <taxon>Euteleostomi</taxon>
        <taxon>Archelosauria</taxon>
        <taxon>Archosauria</taxon>
        <taxon>Dinosauria</taxon>
        <taxon>Saurischia</taxon>
        <taxon>Theropoda</taxon>
        <taxon>Coelurosauria</taxon>
        <taxon>Aves</taxon>
        <taxon>Neognathae</taxon>
        <taxon>Galloanserae</taxon>
        <taxon>Anseriformes</taxon>
        <taxon>Anatidae</taxon>
        <taxon>Anatinae</taxon>
        <taxon>Anas</taxon>
    </lineage>
</organism>
<evidence type="ECO:0000250" key="1"/>
<evidence type="ECO:0000250" key="2">
    <source>
        <dbReference type="UniProtKB" id="P07108"/>
    </source>
</evidence>
<evidence type="ECO:0000255" key="3">
    <source>
        <dbReference type="PROSITE-ProRule" id="PRU00573"/>
    </source>
</evidence>
<evidence type="ECO:0000305" key="4"/>